<dbReference type="EC" id="4.2.1.11" evidence="1"/>
<dbReference type="EMBL" id="AM260525">
    <property type="protein sequence ID" value="CAK01262.1"/>
    <property type="molecule type" value="Genomic_DNA"/>
</dbReference>
<dbReference type="RefSeq" id="WP_012231406.1">
    <property type="nucleotide sequence ID" value="NC_010161.1"/>
</dbReference>
<dbReference type="SMR" id="A9IS50"/>
<dbReference type="KEGG" id="btr:BT_0856"/>
<dbReference type="eggNOG" id="COG0148">
    <property type="taxonomic scope" value="Bacteria"/>
</dbReference>
<dbReference type="HOGENOM" id="CLU_031223_2_1_5"/>
<dbReference type="UniPathway" id="UPA00109">
    <property type="reaction ID" value="UER00187"/>
</dbReference>
<dbReference type="Proteomes" id="UP000001592">
    <property type="component" value="Chromosome"/>
</dbReference>
<dbReference type="GO" id="GO:0009986">
    <property type="term" value="C:cell surface"/>
    <property type="evidence" value="ECO:0007669"/>
    <property type="project" value="UniProtKB-SubCell"/>
</dbReference>
<dbReference type="GO" id="GO:0005576">
    <property type="term" value="C:extracellular region"/>
    <property type="evidence" value="ECO:0007669"/>
    <property type="project" value="UniProtKB-SubCell"/>
</dbReference>
<dbReference type="GO" id="GO:0000015">
    <property type="term" value="C:phosphopyruvate hydratase complex"/>
    <property type="evidence" value="ECO:0007669"/>
    <property type="project" value="InterPro"/>
</dbReference>
<dbReference type="GO" id="GO:0000287">
    <property type="term" value="F:magnesium ion binding"/>
    <property type="evidence" value="ECO:0007669"/>
    <property type="project" value="UniProtKB-UniRule"/>
</dbReference>
<dbReference type="GO" id="GO:0004634">
    <property type="term" value="F:phosphopyruvate hydratase activity"/>
    <property type="evidence" value="ECO:0007669"/>
    <property type="project" value="UniProtKB-UniRule"/>
</dbReference>
<dbReference type="GO" id="GO:0006096">
    <property type="term" value="P:glycolytic process"/>
    <property type="evidence" value="ECO:0007669"/>
    <property type="project" value="UniProtKB-UniRule"/>
</dbReference>
<dbReference type="CDD" id="cd03313">
    <property type="entry name" value="enolase"/>
    <property type="match status" value="1"/>
</dbReference>
<dbReference type="FunFam" id="3.20.20.120:FF:000001">
    <property type="entry name" value="Enolase"/>
    <property type="match status" value="1"/>
</dbReference>
<dbReference type="FunFam" id="3.30.390.10:FF:000001">
    <property type="entry name" value="Enolase"/>
    <property type="match status" value="1"/>
</dbReference>
<dbReference type="Gene3D" id="3.20.20.120">
    <property type="entry name" value="Enolase-like C-terminal domain"/>
    <property type="match status" value="1"/>
</dbReference>
<dbReference type="Gene3D" id="3.30.390.10">
    <property type="entry name" value="Enolase-like, N-terminal domain"/>
    <property type="match status" value="1"/>
</dbReference>
<dbReference type="HAMAP" id="MF_00318">
    <property type="entry name" value="Enolase"/>
    <property type="match status" value="1"/>
</dbReference>
<dbReference type="InterPro" id="IPR000941">
    <property type="entry name" value="Enolase"/>
</dbReference>
<dbReference type="InterPro" id="IPR036849">
    <property type="entry name" value="Enolase-like_C_sf"/>
</dbReference>
<dbReference type="InterPro" id="IPR029017">
    <property type="entry name" value="Enolase-like_N"/>
</dbReference>
<dbReference type="InterPro" id="IPR020810">
    <property type="entry name" value="Enolase_C"/>
</dbReference>
<dbReference type="InterPro" id="IPR020809">
    <property type="entry name" value="Enolase_CS"/>
</dbReference>
<dbReference type="InterPro" id="IPR020811">
    <property type="entry name" value="Enolase_N"/>
</dbReference>
<dbReference type="NCBIfam" id="TIGR01060">
    <property type="entry name" value="eno"/>
    <property type="match status" value="1"/>
</dbReference>
<dbReference type="PANTHER" id="PTHR11902">
    <property type="entry name" value="ENOLASE"/>
    <property type="match status" value="1"/>
</dbReference>
<dbReference type="PANTHER" id="PTHR11902:SF1">
    <property type="entry name" value="ENOLASE"/>
    <property type="match status" value="1"/>
</dbReference>
<dbReference type="Pfam" id="PF00113">
    <property type="entry name" value="Enolase_C"/>
    <property type="match status" value="1"/>
</dbReference>
<dbReference type="Pfam" id="PF03952">
    <property type="entry name" value="Enolase_N"/>
    <property type="match status" value="1"/>
</dbReference>
<dbReference type="PIRSF" id="PIRSF001400">
    <property type="entry name" value="Enolase"/>
    <property type="match status" value="1"/>
</dbReference>
<dbReference type="PRINTS" id="PR00148">
    <property type="entry name" value="ENOLASE"/>
</dbReference>
<dbReference type="SFLD" id="SFLDF00002">
    <property type="entry name" value="enolase"/>
    <property type="match status" value="1"/>
</dbReference>
<dbReference type="SFLD" id="SFLDG00178">
    <property type="entry name" value="enolase"/>
    <property type="match status" value="1"/>
</dbReference>
<dbReference type="SMART" id="SM01192">
    <property type="entry name" value="Enolase_C"/>
    <property type="match status" value="1"/>
</dbReference>
<dbReference type="SMART" id="SM01193">
    <property type="entry name" value="Enolase_N"/>
    <property type="match status" value="1"/>
</dbReference>
<dbReference type="SUPFAM" id="SSF51604">
    <property type="entry name" value="Enolase C-terminal domain-like"/>
    <property type="match status" value="1"/>
</dbReference>
<dbReference type="SUPFAM" id="SSF54826">
    <property type="entry name" value="Enolase N-terminal domain-like"/>
    <property type="match status" value="1"/>
</dbReference>
<dbReference type="PROSITE" id="PS00164">
    <property type="entry name" value="ENOLASE"/>
    <property type="match status" value="1"/>
</dbReference>
<comment type="function">
    <text evidence="1">Catalyzes the reversible conversion of 2-phosphoglycerate (2-PG) into phosphoenolpyruvate (PEP). It is essential for the degradation of carbohydrates via glycolysis.</text>
</comment>
<comment type="catalytic activity">
    <reaction evidence="1">
        <text>(2R)-2-phosphoglycerate = phosphoenolpyruvate + H2O</text>
        <dbReference type="Rhea" id="RHEA:10164"/>
        <dbReference type="ChEBI" id="CHEBI:15377"/>
        <dbReference type="ChEBI" id="CHEBI:58289"/>
        <dbReference type="ChEBI" id="CHEBI:58702"/>
        <dbReference type="EC" id="4.2.1.11"/>
    </reaction>
</comment>
<comment type="cofactor">
    <cofactor evidence="1">
        <name>Mg(2+)</name>
        <dbReference type="ChEBI" id="CHEBI:18420"/>
    </cofactor>
    <text evidence="1">Binds a second Mg(2+) ion via substrate during catalysis.</text>
</comment>
<comment type="pathway">
    <text evidence="1">Carbohydrate degradation; glycolysis; pyruvate from D-glyceraldehyde 3-phosphate: step 4/5.</text>
</comment>
<comment type="subcellular location">
    <subcellularLocation>
        <location evidence="1">Cytoplasm</location>
    </subcellularLocation>
    <subcellularLocation>
        <location evidence="1">Secreted</location>
    </subcellularLocation>
    <subcellularLocation>
        <location evidence="1">Cell surface</location>
    </subcellularLocation>
    <text evidence="1">Fractions of enolase are present in both the cytoplasm and on the cell surface.</text>
</comment>
<comment type="similarity">
    <text evidence="1">Belongs to the enolase family.</text>
</comment>
<organism>
    <name type="scientific">Bartonella tribocorum (strain CIP 105476 / IBS 506)</name>
    <dbReference type="NCBI Taxonomy" id="382640"/>
    <lineage>
        <taxon>Bacteria</taxon>
        <taxon>Pseudomonadati</taxon>
        <taxon>Pseudomonadota</taxon>
        <taxon>Alphaproteobacteria</taxon>
        <taxon>Hyphomicrobiales</taxon>
        <taxon>Bartonellaceae</taxon>
        <taxon>Bartonella</taxon>
    </lineage>
</organism>
<proteinExistence type="inferred from homology"/>
<protein>
    <recommendedName>
        <fullName evidence="1">Enolase</fullName>
        <ecNumber evidence="1">4.2.1.11</ecNumber>
    </recommendedName>
    <alternativeName>
        <fullName evidence="1">2-phospho-D-glycerate hydro-lyase</fullName>
    </alternativeName>
    <alternativeName>
        <fullName evidence="1">2-phosphoglycerate dehydratase</fullName>
    </alternativeName>
</protein>
<keyword id="KW-0963">Cytoplasm</keyword>
<keyword id="KW-0324">Glycolysis</keyword>
<keyword id="KW-0456">Lyase</keyword>
<keyword id="KW-0460">Magnesium</keyword>
<keyword id="KW-0479">Metal-binding</keyword>
<keyword id="KW-0964">Secreted</keyword>
<feature type="chain" id="PRO_1000079122" description="Enolase">
    <location>
        <begin position="1"/>
        <end position="422"/>
    </location>
</feature>
<feature type="active site" description="Proton donor" evidence="1">
    <location>
        <position position="204"/>
    </location>
</feature>
<feature type="active site" description="Proton acceptor" evidence="1">
    <location>
        <position position="336"/>
    </location>
</feature>
<feature type="binding site" evidence="1">
    <location>
        <position position="162"/>
    </location>
    <ligand>
        <name>(2R)-2-phosphoglycerate</name>
        <dbReference type="ChEBI" id="CHEBI:58289"/>
    </ligand>
</feature>
<feature type="binding site" evidence="1">
    <location>
        <position position="241"/>
    </location>
    <ligand>
        <name>Mg(2+)</name>
        <dbReference type="ChEBI" id="CHEBI:18420"/>
    </ligand>
</feature>
<feature type="binding site" evidence="1">
    <location>
        <position position="284"/>
    </location>
    <ligand>
        <name>Mg(2+)</name>
        <dbReference type="ChEBI" id="CHEBI:18420"/>
    </ligand>
</feature>
<feature type="binding site" evidence="1">
    <location>
        <position position="311"/>
    </location>
    <ligand>
        <name>Mg(2+)</name>
        <dbReference type="ChEBI" id="CHEBI:18420"/>
    </ligand>
</feature>
<feature type="binding site" evidence="1">
    <location>
        <position position="336"/>
    </location>
    <ligand>
        <name>(2R)-2-phosphoglycerate</name>
        <dbReference type="ChEBI" id="CHEBI:58289"/>
    </ligand>
</feature>
<feature type="binding site" evidence="1">
    <location>
        <position position="365"/>
    </location>
    <ligand>
        <name>(2R)-2-phosphoglycerate</name>
        <dbReference type="ChEBI" id="CHEBI:58289"/>
    </ligand>
</feature>
<feature type="binding site" evidence="1">
    <location>
        <position position="366"/>
    </location>
    <ligand>
        <name>(2R)-2-phosphoglycerate</name>
        <dbReference type="ChEBI" id="CHEBI:58289"/>
    </ligand>
</feature>
<feature type="binding site" evidence="1">
    <location>
        <position position="387"/>
    </location>
    <ligand>
        <name>(2R)-2-phosphoglycerate</name>
        <dbReference type="ChEBI" id="CHEBI:58289"/>
    </ligand>
</feature>
<accession>A9IS50</accession>
<evidence type="ECO:0000255" key="1">
    <source>
        <dbReference type="HAMAP-Rule" id="MF_00318"/>
    </source>
</evidence>
<sequence length="422" mass="45505">MTIIVDIIGREVLDSRGNPTVEVDVYLENGAFGRALVPSGASTGAHEAIELRDGDLRYQGKGVEKAVAAVNGEILEELGGRDARDQIAIDQAMIALDGTPNKARLGANALLGVSLAVAKAAADSLNLPLYRYIGGTQAHILPTPMMNIINGGVHADNLIDFQEFMIIPVGAPSVKEAIRYGAEIFHALKKRLKDAGYNTNVGDEGGFAPQFKSADQAIDFIMESIIACGYKPGEQIAIGLDCASTEFYKNGSYFYKGEGKCRNIAEQVDYLAQLVKSYPIVTIEDGMAEDDWEGWKLLTDTIGTKCQMVGDDLFVTNSARLRDGIKMGVGNSILIKVNQIGTLSETLDAVEVAHKAGYRAIISHRSGETEDSFIADLAVATNCGQIKTGSLARSDRLAKYNQLIRIEEMLGSQARYAGDIYR</sequence>
<reference key="1">
    <citation type="journal article" date="2007" name="Nat. Genet.">
        <title>Genomic analysis of Bartonella identifies type IV secretion systems as host adaptability factors.</title>
        <authorList>
            <person name="Saenz H.L."/>
            <person name="Engel P."/>
            <person name="Stoeckli M.C."/>
            <person name="Lanz C."/>
            <person name="Raddatz G."/>
            <person name="Vayssier-Taussat M."/>
            <person name="Birtles R."/>
            <person name="Schuster S.C."/>
            <person name="Dehio C."/>
        </authorList>
    </citation>
    <scope>NUCLEOTIDE SEQUENCE [LARGE SCALE GENOMIC DNA]</scope>
    <source>
        <strain>CIP 105476 / IBS 506</strain>
    </source>
</reference>
<name>ENO_BART1</name>
<gene>
    <name evidence="1" type="primary">eno</name>
    <name type="ordered locus">BT_0856</name>
</gene>